<reference key="1">
    <citation type="submission" date="1997-10" db="EMBL/GenBank/DDBJ databases">
        <title>Sequence analysis of the Bacillus subtilis chromosome region between the terC and odhAB loci cloned in a yeast artificial chromosome.</title>
        <authorList>
            <person name="Lapidus A."/>
            <person name="Galleron N."/>
            <person name="Sorokin A."/>
            <person name="Ehrlich S.D."/>
        </authorList>
    </citation>
    <scope>NUCLEOTIDE SEQUENCE [GENOMIC DNA]</scope>
</reference>
<reference key="2">
    <citation type="journal article" date="1997" name="Nature">
        <title>The complete genome sequence of the Gram-positive bacterium Bacillus subtilis.</title>
        <authorList>
            <person name="Kunst F."/>
            <person name="Ogasawara N."/>
            <person name="Moszer I."/>
            <person name="Albertini A.M."/>
            <person name="Alloni G."/>
            <person name="Azevedo V."/>
            <person name="Bertero M.G."/>
            <person name="Bessieres P."/>
            <person name="Bolotin A."/>
            <person name="Borchert S."/>
            <person name="Borriss R."/>
            <person name="Boursier L."/>
            <person name="Brans A."/>
            <person name="Braun M."/>
            <person name="Brignell S.C."/>
            <person name="Bron S."/>
            <person name="Brouillet S."/>
            <person name="Bruschi C.V."/>
            <person name="Caldwell B."/>
            <person name="Capuano V."/>
            <person name="Carter N.M."/>
            <person name="Choi S.-K."/>
            <person name="Codani J.-J."/>
            <person name="Connerton I.F."/>
            <person name="Cummings N.J."/>
            <person name="Daniel R.A."/>
            <person name="Denizot F."/>
            <person name="Devine K.M."/>
            <person name="Duesterhoeft A."/>
            <person name="Ehrlich S.D."/>
            <person name="Emmerson P.T."/>
            <person name="Entian K.-D."/>
            <person name="Errington J."/>
            <person name="Fabret C."/>
            <person name="Ferrari E."/>
            <person name="Foulger D."/>
            <person name="Fritz C."/>
            <person name="Fujita M."/>
            <person name="Fujita Y."/>
            <person name="Fuma S."/>
            <person name="Galizzi A."/>
            <person name="Galleron N."/>
            <person name="Ghim S.-Y."/>
            <person name="Glaser P."/>
            <person name="Goffeau A."/>
            <person name="Golightly E.J."/>
            <person name="Grandi G."/>
            <person name="Guiseppi G."/>
            <person name="Guy B.J."/>
            <person name="Haga K."/>
            <person name="Haiech J."/>
            <person name="Harwood C.R."/>
            <person name="Henaut A."/>
            <person name="Hilbert H."/>
            <person name="Holsappel S."/>
            <person name="Hosono S."/>
            <person name="Hullo M.-F."/>
            <person name="Itaya M."/>
            <person name="Jones L.-M."/>
            <person name="Joris B."/>
            <person name="Karamata D."/>
            <person name="Kasahara Y."/>
            <person name="Klaerr-Blanchard M."/>
            <person name="Klein C."/>
            <person name="Kobayashi Y."/>
            <person name="Koetter P."/>
            <person name="Koningstein G."/>
            <person name="Krogh S."/>
            <person name="Kumano M."/>
            <person name="Kurita K."/>
            <person name="Lapidus A."/>
            <person name="Lardinois S."/>
            <person name="Lauber J."/>
            <person name="Lazarevic V."/>
            <person name="Lee S.-M."/>
            <person name="Levine A."/>
            <person name="Liu H."/>
            <person name="Masuda S."/>
            <person name="Mauel C."/>
            <person name="Medigue C."/>
            <person name="Medina N."/>
            <person name="Mellado R.P."/>
            <person name="Mizuno M."/>
            <person name="Moestl D."/>
            <person name="Nakai S."/>
            <person name="Noback M."/>
            <person name="Noone D."/>
            <person name="O'Reilly M."/>
            <person name="Ogawa K."/>
            <person name="Ogiwara A."/>
            <person name="Oudega B."/>
            <person name="Park S.-H."/>
            <person name="Parro V."/>
            <person name="Pohl T.M."/>
            <person name="Portetelle D."/>
            <person name="Porwollik S."/>
            <person name="Prescott A.M."/>
            <person name="Presecan E."/>
            <person name="Pujic P."/>
            <person name="Purnelle B."/>
            <person name="Rapoport G."/>
            <person name="Rey M."/>
            <person name="Reynolds S."/>
            <person name="Rieger M."/>
            <person name="Rivolta C."/>
            <person name="Rocha E."/>
            <person name="Roche B."/>
            <person name="Rose M."/>
            <person name="Sadaie Y."/>
            <person name="Sato T."/>
            <person name="Scanlan E."/>
            <person name="Schleich S."/>
            <person name="Schroeter R."/>
            <person name="Scoffone F."/>
            <person name="Sekiguchi J."/>
            <person name="Sekowska A."/>
            <person name="Seror S.J."/>
            <person name="Serror P."/>
            <person name="Shin B.-S."/>
            <person name="Soldo B."/>
            <person name="Sorokin A."/>
            <person name="Tacconi E."/>
            <person name="Takagi T."/>
            <person name="Takahashi H."/>
            <person name="Takemaru K."/>
            <person name="Takeuchi M."/>
            <person name="Tamakoshi A."/>
            <person name="Tanaka T."/>
            <person name="Terpstra P."/>
            <person name="Tognoni A."/>
            <person name="Tosato V."/>
            <person name="Uchiyama S."/>
            <person name="Vandenbol M."/>
            <person name="Vannier F."/>
            <person name="Vassarotti A."/>
            <person name="Viari A."/>
            <person name="Wambutt R."/>
            <person name="Wedler E."/>
            <person name="Wedler H."/>
            <person name="Weitzenegger T."/>
            <person name="Winters P."/>
            <person name="Wipat A."/>
            <person name="Yamamoto H."/>
            <person name="Yamane K."/>
            <person name="Yasumoto K."/>
            <person name="Yata K."/>
            <person name="Yoshida K."/>
            <person name="Yoshikawa H.-F."/>
            <person name="Zumstein E."/>
            <person name="Yoshikawa H."/>
            <person name="Danchin A."/>
        </authorList>
    </citation>
    <scope>NUCLEOTIDE SEQUENCE [LARGE SCALE GENOMIC DNA]</scope>
    <source>
        <strain>168</strain>
    </source>
</reference>
<reference key="3">
    <citation type="journal article" date="2010" name="Genes Dev.">
        <title>Functional microdomains in bacterial membranes.</title>
        <authorList>
            <person name="Lopez D."/>
            <person name="Kolter R."/>
        </authorList>
    </citation>
    <scope>DISRUPTION PHENOTYPE</scope>
    <source>
        <strain>168 / Marburg / ATCC 6051 / DSM 10 / JCM 1465 / NBRC 13719 / NCIMB 3610 / NRRL NRS-744 / VKM B-501</strain>
    </source>
</reference>
<reference key="4">
    <citation type="journal article" date="2011" name="J. Am. Chem. Soc.">
        <title>Sesquarterpenes (C35 terpenes) biosynthesized via the cyclization of a linear C35 isoprenoid by a tetraprenyl-beta-curcumene synthase and a tetraprenyl-beta-curcumene cyclase: identification of a new terpene cyclase.</title>
        <authorList>
            <person name="Sato T."/>
            <person name="Yoshida S."/>
            <person name="Hoshino H."/>
            <person name="Tanno M."/>
            <person name="Nakajima M."/>
            <person name="Hoshino T."/>
        </authorList>
    </citation>
    <scope>FUNCTION</scope>
    <scope>CATALYTIC ACTIVITY</scope>
</reference>
<comment type="function">
    <text evidence="4">Catalyzes the cyclization of tetraprenyl beta-curcumene into sporulenol.</text>
</comment>
<comment type="catalytic activity">
    <reaction evidence="4">
        <text>sporulenol = (R)-tetraprenyl-beta-curcumene + H2O</text>
        <dbReference type="Rhea" id="RHEA:34255"/>
        <dbReference type="ChEBI" id="CHEBI:15377"/>
        <dbReference type="ChEBI" id="CHEBI:64801"/>
        <dbReference type="ChEBI" id="CHEBI:67182"/>
        <dbReference type="EC" id="4.2.1.137"/>
    </reaction>
</comment>
<comment type="pathway">
    <text>Secondary metabolite biosynthesis; hopanoid biosynthesis.</text>
</comment>
<comment type="subcellular location">
    <subcellularLocation>
        <location evidence="1">Cell membrane</location>
        <topology evidence="1">Peripheral membrane protein</topology>
    </subcellularLocation>
</comment>
<comment type="disruption phenotype">
    <text evidence="3">No effect on biofilm formation.</text>
</comment>
<comment type="similarity">
    <text evidence="5">Belongs to the terpene cyclase/mutase family.</text>
</comment>
<comment type="sequence caution" evidence="5">
    <conflict type="frameshift">
        <sequence resource="EMBL-CDS" id="AAB84441"/>
    </conflict>
</comment>
<evidence type="ECO:0000250" key="1"/>
<evidence type="ECO:0000250" key="2">
    <source>
        <dbReference type="UniProtKB" id="P48449"/>
    </source>
</evidence>
<evidence type="ECO:0000269" key="3">
    <source>
    </source>
</evidence>
<evidence type="ECO:0000269" key="4">
    <source>
    </source>
</evidence>
<evidence type="ECO:0000305" key="5"/>
<proteinExistence type="evidence at protein level"/>
<protein>
    <recommendedName>
        <fullName>Sporulenol synthase</fullName>
        <ecNumber>4.2.1.137</ecNumber>
    </recommendedName>
    <alternativeName>
        <fullName>Tetraprenyl-beta-curcumene cyclase</fullName>
    </alternativeName>
</protein>
<gene>
    <name type="primary">sqhC</name>
    <name type="ordered locus">BSU19320</name>
</gene>
<name>SQHC_BACSU</name>
<accession>Q796C3</accession>
<accession>O34650</accession>
<sequence>MGTLQEKVRRFQKKTITELRDRQNADGSWTFCFEGPIMTNSFFILLLTSLDEGENEKELISSLAAGIHAKQQPDGTFINYPDETRGNLTATVQGYVGMLASGCFHRTEPHMKKAEQFIISHGGLRHVHFMTKWMLAANGLYPWPALYLPLSLMALPPTLPIHFYQFSSYARIHFAPMAVTLNQRFVLINRNISSLHHLDPHMTKNPFTWLRSDAFEERDLTSILLHWKRVFHAPFAFQQLGLQTAKTYMLDRIEKDGTLYSYASATIYMVYSLLSLGVSRYSPIIRRAITGIKSLVTKCNGIPYLENSTSTVWDTALISYALQKNGVTETDGSVTKAADFLLERQHTKIADWSVKNPNSVPGGWGFSNINTNNPDCDDTTAVLKAIPRNHSPAAWERGVSWLLSMQNNDGGFSAFEKNVNHPLIRLLPLESAEDAAVDPSTADLTGRVLHFLGEKVGFTEKHQHIQRAVKWLFEHQEQNGSWYGRWGVCYIYGTWAALTGMHACGVDRKHPGIQKALRWLKSIQNDDGSWGESCKSAEIKTYVPLHRGTIVQTAWALDALLTYENSEHPSVVKGMQYLTDSSSHSADSLAYPAGIGLPKQFYIRYHSYPYVFSLLAVGKYLDSIEKETANET</sequence>
<keyword id="KW-1003">Cell membrane</keyword>
<keyword id="KW-0456">Lyase</keyword>
<keyword id="KW-0472">Membrane</keyword>
<keyword id="KW-1185">Reference proteome</keyword>
<keyword id="KW-0677">Repeat</keyword>
<organism>
    <name type="scientific">Bacillus subtilis (strain 168)</name>
    <dbReference type="NCBI Taxonomy" id="224308"/>
    <lineage>
        <taxon>Bacteria</taxon>
        <taxon>Bacillati</taxon>
        <taxon>Bacillota</taxon>
        <taxon>Bacilli</taxon>
        <taxon>Bacillales</taxon>
        <taxon>Bacillaceae</taxon>
        <taxon>Bacillus</taxon>
    </lineage>
</organism>
<dbReference type="EC" id="4.2.1.137"/>
<dbReference type="EMBL" id="AF027868">
    <property type="protein sequence ID" value="AAB84441.1"/>
    <property type="status" value="ALT_FRAME"/>
    <property type="molecule type" value="Genomic_DNA"/>
</dbReference>
<dbReference type="EMBL" id="AL009126">
    <property type="protein sequence ID" value="CAB13824.2"/>
    <property type="molecule type" value="Genomic_DNA"/>
</dbReference>
<dbReference type="PIR" id="A69718">
    <property type="entry name" value="A69718"/>
</dbReference>
<dbReference type="RefSeq" id="NP_389814.2">
    <property type="nucleotide sequence ID" value="NC_000964.3"/>
</dbReference>
<dbReference type="RefSeq" id="WP_004399534.1">
    <property type="nucleotide sequence ID" value="NZ_OZ025638.1"/>
</dbReference>
<dbReference type="SMR" id="Q796C3"/>
<dbReference type="FunCoup" id="Q796C3">
    <property type="interactions" value="190"/>
</dbReference>
<dbReference type="STRING" id="224308.BSU19320"/>
<dbReference type="PaxDb" id="224308-BSU19320"/>
<dbReference type="EnsemblBacteria" id="CAB13824">
    <property type="protein sequence ID" value="CAB13824"/>
    <property type="gene ID" value="BSU_19320"/>
</dbReference>
<dbReference type="GeneID" id="939443"/>
<dbReference type="KEGG" id="bsu:BSU19320"/>
<dbReference type="PATRIC" id="fig|224308.179.peg.2113"/>
<dbReference type="eggNOG" id="COG1657">
    <property type="taxonomic scope" value="Bacteria"/>
</dbReference>
<dbReference type="InParanoid" id="Q796C3"/>
<dbReference type="OrthoDB" id="9758578at2"/>
<dbReference type="PhylomeDB" id="Q796C3"/>
<dbReference type="BioCyc" id="BSUB:BSU19320-MONOMER"/>
<dbReference type="BRENDA" id="4.2.1.137">
    <property type="organism ID" value="658"/>
</dbReference>
<dbReference type="UniPathway" id="UPA00337"/>
<dbReference type="Proteomes" id="UP000001570">
    <property type="component" value="Chromosome"/>
</dbReference>
<dbReference type="GO" id="GO:0005811">
    <property type="term" value="C:lipid droplet"/>
    <property type="evidence" value="ECO:0007669"/>
    <property type="project" value="InterPro"/>
</dbReference>
<dbReference type="GO" id="GO:0005886">
    <property type="term" value="C:plasma membrane"/>
    <property type="evidence" value="ECO:0007669"/>
    <property type="project" value="UniProtKB-SubCell"/>
</dbReference>
<dbReference type="GO" id="GO:0016866">
    <property type="term" value="F:intramolecular transferase activity"/>
    <property type="evidence" value="ECO:0007669"/>
    <property type="project" value="InterPro"/>
</dbReference>
<dbReference type="GO" id="GO:0016829">
    <property type="term" value="F:lyase activity"/>
    <property type="evidence" value="ECO:0007669"/>
    <property type="project" value="UniProtKB-KW"/>
</dbReference>
<dbReference type="GO" id="GO:0016104">
    <property type="term" value="P:triterpenoid biosynthetic process"/>
    <property type="evidence" value="ECO:0007669"/>
    <property type="project" value="InterPro"/>
</dbReference>
<dbReference type="CDD" id="cd02892">
    <property type="entry name" value="SQCY_1"/>
    <property type="match status" value="1"/>
</dbReference>
<dbReference type="Gene3D" id="1.50.10.20">
    <property type="match status" value="2"/>
</dbReference>
<dbReference type="InterPro" id="IPR032696">
    <property type="entry name" value="SQ_cyclase_C"/>
</dbReference>
<dbReference type="InterPro" id="IPR032697">
    <property type="entry name" value="SQ_cyclase_N"/>
</dbReference>
<dbReference type="InterPro" id="IPR018333">
    <property type="entry name" value="Squalene_cyclase"/>
</dbReference>
<dbReference type="InterPro" id="IPR008930">
    <property type="entry name" value="Terpenoid_cyclase/PrenylTrfase"/>
</dbReference>
<dbReference type="NCBIfam" id="TIGR01787">
    <property type="entry name" value="squalene_cyclas"/>
    <property type="match status" value="1"/>
</dbReference>
<dbReference type="PANTHER" id="PTHR11764:SF20">
    <property type="entry name" value="LANOSTEROL SYNTHASE"/>
    <property type="match status" value="1"/>
</dbReference>
<dbReference type="PANTHER" id="PTHR11764">
    <property type="entry name" value="TERPENE CYCLASE/MUTASE FAMILY MEMBER"/>
    <property type="match status" value="1"/>
</dbReference>
<dbReference type="Pfam" id="PF13243">
    <property type="entry name" value="SQHop_cyclase_C"/>
    <property type="match status" value="1"/>
</dbReference>
<dbReference type="Pfam" id="PF13249">
    <property type="entry name" value="SQHop_cyclase_N"/>
    <property type="match status" value="1"/>
</dbReference>
<dbReference type="SFLD" id="SFLDG01016">
    <property type="entry name" value="Prenyltransferase_Like_2"/>
    <property type="match status" value="1"/>
</dbReference>
<dbReference type="SUPFAM" id="SSF48239">
    <property type="entry name" value="Terpenoid cyclases/Protein prenyltransferases"/>
    <property type="match status" value="2"/>
</dbReference>
<feature type="chain" id="PRO_0000360070" description="Sporulenol synthase">
    <location>
        <begin position="1"/>
        <end position="632"/>
    </location>
</feature>
<feature type="repeat" description="PFTB 1">
    <location>
        <begin position="395"/>
        <end position="436"/>
    </location>
</feature>
<feature type="repeat" description="PFTB 2">
    <location>
        <begin position="465"/>
        <end position="505"/>
    </location>
</feature>
<feature type="repeat" description="PFTB 3">
    <location>
        <begin position="513"/>
        <end position="554"/>
    </location>
</feature>
<feature type="active site" description="Proton donor" evidence="2">
    <location>
        <position position="377"/>
    </location>
</feature>